<sequence>MSEKTIVVLPGDHVGTEITNEAIKVLKAIEEVRPNVKFNFQHHLIGGAAIDATGVPLPDEALEAAKKADAVLLGAVGGPKWGTGAVRPEQGLLKIRKELNLYANLRPCNFASESLLELSPIKAEFAKGTDFTVVRELVGGIYFGERKEDDGSGVASDTETYSVPEVQRITRMAAFMALQHNPPLPIWSLDKANVLASSRLWRKTVTETIEKEFPQLTVQHQLIDSAAMILIKSPTTLNGIVITSNMFGDIISDEASVIPGSLGLLPSASLASLPDTNKAFGLYEPCHGSAPDLPANKVNPIATILSAAMMLKLSLDLFEEGVALEKAVKEVLDAGVRTGDLRGSNSTKEVGDAAVEAAKRILKN</sequence>
<reference key="1">
    <citation type="journal article" date="2001" name="Yeast">
        <title>Cloning and sequence analysis of the LEU2 homologue gene from Pichia anomala.</title>
        <authorList>
            <person name="de la Rosa J.M."/>
            <person name="Perez J.A."/>
            <person name="Gutierrez F."/>
            <person name="Gonzalez J.M."/>
            <person name="Ruiz T."/>
            <person name="Rodriguez L."/>
        </authorList>
    </citation>
    <scope>NUCLEOTIDE SEQUENCE [GENOMIC DNA]</scope>
    <source>
        <strain>ATCC 8168 / CBS 5759 / DSM 6766 / JCM 3585 / IAM 12210 / NCYC 432 / NBRC 10213 / NRRL Y-366 / AJ 5027</strain>
    </source>
</reference>
<feature type="chain" id="PRO_0000083609" description="3-isopropylmalate dehydrogenase">
    <location>
        <begin position="1"/>
        <end position="364"/>
    </location>
</feature>
<feature type="binding site" evidence="1">
    <location>
        <begin position="78"/>
        <end position="89"/>
    </location>
    <ligand>
        <name>NAD(+)</name>
        <dbReference type="ChEBI" id="CHEBI:57540"/>
    </ligand>
</feature>
<feature type="binding site" evidence="1">
    <location>
        <position position="96"/>
    </location>
    <ligand>
        <name>substrate</name>
    </ligand>
</feature>
<feature type="binding site" evidence="1">
    <location>
        <position position="106"/>
    </location>
    <ligand>
        <name>substrate</name>
    </ligand>
</feature>
<feature type="binding site" evidence="1">
    <location>
        <position position="135"/>
    </location>
    <ligand>
        <name>substrate</name>
    </ligand>
</feature>
<feature type="binding site" evidence="1">
    <location>
        <position position="224"/>
    </location>
    <ligand>
        <name>Mg(2+)</name>
        <dbReference type="ChEBI" id="CHEBI:18420"/>
    </ligand>
</feature>
<feature type="binding site" evidence="1">
    <location>
        <position position="224"/>
    </location>
    <ligand>
        <name>substrate</name>
    </ligand>
</feature>
<feature type="binding site" evidence="1">
    <location>
        <position position="249"/>
    </location>
    <ligand>
        <name>Mg(2+)</name>
        <dbReference type="ChEBI" id="CHEBI:18420"/>
    </ligand>
</feature>
<feature type="binding site" evidence="1">
    <location>
        <position position="253"/>
    </location>
    <ligand>
        <name>Mg(2+)</name>
        <dbReference type="ChEBI" id="CHEBI:18420"/>
    </ligand>
</feature>
<feature type="binding site" evidence="1">
    <location>
        <begin position="288"/>
        <end position="299"/>
    </location>
    <ligand>
        <name>NAD(+)</name>
        <dbReference type="ChEBI" id="CHEBI:57540"/>
    </ligand>
</feature>
<feature type="site" description="Important for catalysis" evidence="1">
    <location>
        <position position="142"/>
    </location>
</feature>
<feature type="site" description="Important for catalysis" evidence="1">
    <location>
        <position position="191"/>
    </location>
</feature>
<protein>
    <recommendedName>
        <fullName>3-isopropylmalate dehydrogenase</fullName>
        <shortName>3-IPM-DH</shortName>
        <shortName>IMDH</shortName>
        <ecNumber>1.1.1.85</ecNumber>
    </recommendedName>
    <alternativeName>
        <fullName>Beta-IPM dehydrogenase</fullName>
    </alternativeName>
</protein>
<proteinExistence type="inferred from homology"/>
<comment type="function">
    <text>Catalyzes the oxidation of 3-carboxy-2-hydroxy-4-methylpentanoate (3-isopropylmalate) to 3-carboxy-4-methyl-2-oxopentanoate. The product decarboxylates to 4-methyl-2 oxopentanoate.</text>
</comment>
<comment type="catalytic activity">
    <reaction>
        <text>(2R,3S)-3-isopropylmalate + NAD(+) = 4-methyl-2-oxopentanoate + CO2 + NADH</text>
        <dbReference type="Rhea" id="RHEA:32271"/>
        <dbReference type="ChEBI" id="CHEBI:16526"/>
        <dbReference type="ChEBI" id="CHEBI:17865"/>
        <dbReference type="ChEBI" id="CHEBI:35121"/>
        <dbReference type="ChEBI" id="CHEBI:57540"/>
        <dbReference type="ChEBI" id="CHEBI:57945"/>
        <dbReference type="EC" id="1.1.1.85"/>
    </reaction>
</comment>
<comment type="cofactor">
    <cofactor evidence="1">
        <name>Mg(2+)</name>
        <dbReference type="ChEBI" id="CHEBI:18420"/>
    </cofactor>
    <cofactor evidence="1">
        <name>Mn(2+)</name>
        <dbReference type="ChEBI" id="CHEBI:29035"/>
    </cofactor>
    <text evidence="1">Binds 1 Mg(2+) or Mn(2+) ion per subunit.</text>
</comment>
<comment type="pathway">
    <text>Amino-acid biosynthesis; L-leucine biosynthesis; L-leucine from 3-methyl-2-oxobutanoate: step 3/4.</text>
</comment>
<comment type="subunit">
    <text evidence="1">Homodimer.</text>
</comment>
<comment type="subcellular location">
    <subcellularLocation>
        <location>Cytoplasm</location>
    </subcellularLocation>
</comment>
<comment type="similarity">
    <text evidence="2">Belongs to the isocitrate and isopropylmalate dehydrogenases family.</text>
</comment>
<keyword id="KW-0028">Amino-acid biosynthesis</keyword>
<keyword id="KW-0100">Branched-chain amino acid biosynthesis</keyword>
<keyword id="KW-0963">Cytoplasm</keyword>
<keyword id="KW-0432">Leucine biosynthesis</keyword>
<keyword id="KW-0460">Magnesium</keyword>
<keyword id="KW-0464">Manganese</keyword>
<keyword id="KW-0479">Metal-binding</keyword>
<keyword id="KW-0520">NAD</keyword>
<keyword id="KW-0560">Oxidoreductase</keyword>
<accession>Q9HDQ1</accession>
<gene>
    <name type="primary">LEU2</name>
</gene>
<name>LEU3_WICAN</name>
<dbReference type="EC" id="1.1.1.85"/>
<dbReference type="EMBL" id="AJ294714">
    <property type="protein sequence ID" value="CAC08508.1"/>
    <property type="molecule type" value="Genomic_DNA"/>
</dbReference>
<dbReference type="SMR" id="Q9HDQ1"/>
<dbReference type="UniPathway" id="UPA00048">
    <property type="reaction ID" value="UER00072"/>
</dbReference>
<dbReference type="GO" id="GO:0005829">
    <property type="term" value="C:cytosol"/>
    <property type="evidence" value="ECO:0007669"/>
    <property type="project" value="TreeGrafter"/>
</dbReference>
<dbReference type="GO" id="GO:0003862">
    <property type="term" value="F:3-isopropylmalate dehydrogenase activity"/>
    <property type="evidence" value="ECO:0007669"/>
    <property type="project" value="UniProtKB-EC"/>
</dbReference>
<dbReference type="GO" id="GO:0000287">
    <property type="term" value="F:magnesium ion binding"/>
    <property type="evidence" value="ECO:0007669"/>
    <property type="project" value="InterPro"/>
</dbReference>
<dbReference type="GO" id="GO:0051287">
    <property type="term" value="F:NAD binding"/>
    <property type="evidence" value="ECO:0007669"/>
    <property type="project" value="InterPro"/>
</dbReference>
<dbReference type="GO" id="GO:0009098">
    <property type="term" value="P:L-leucine biosynthetic process"/>
    <property type="evidence" value="ECO:0007669"/>
    <property type="project" value="UniProtKB-UniPathway"/>
</dbReference>
<dbReference type="FunFam" id="3.40.718.10:FF:000006">
    <property type="entry name" value="3-isopropylmalate dehydrogenase"/>
    <property type="match status" value="1"/>
</dbReference>
<dbReference type="Gene3D" id="3.40.718.10">
    <property type="entry name" value="Isopropylmalate Dehydrogenase"/>
    <property type="match status" value="1"/>
</dbReference>
<dbReference type="InterPro" id="IPR019818">
    <property type="entry name" value="IsoCit/isopropylmalate_DH_CS"/>
</dbReference>
<dbReference type="InterPro" id="IPR024084">
    <property type="entry name" value="IsoPropMal-DH-like_dom"/>
</dbReference>
<dbReference type="InterPro" id="IPR004429">
    <property type="entry name" value="Isopropylmalate_DH"/>
</dbReference>
<dbReference type="NCBIfam" id="TIGR00169">
    <property type="entry name" value="leuB"/>
    <property type="match status" value="1"/>
</dbReference>
<dbReference type="PANTHER" id="PTHR42979">
    <property type="entry name" value="3-ISOPROPYLMALATE DEHYDROGENASE"/>
    <property type="match status" value="1"/>
</dbReference>
<dbReference type="PANTHER" id="PTHR42979:SF1">
    <property type="entry name" value="3-ISOPROPYLMALATE DEHYDROGENASE"/>
    <property type="match status" value="1"/>
</dbReference>
<dbReference type="Pfam" id="PF00180">
    <property type="entry name" value="Iso_dh"/>
    <property type="match status" value="1"/>
</dbReference>
<dbReference type="SMART" id="SM01329">
    <property type="entry name" value="Iso_dh"/>
    <property type="match status" value="1"/>
</dbReference>
<dbReference type="SUPFAM" id="SSF53659">
    <property type="entry name" value="Isocitrate/Isopropylmalate dehydrogenase-like"/>
    <property type="match status" value="1"/>
</dbReference>
<dbReference type="PROSITE" id="PS00470">
    <property type="entry name" value="IDH_IMDH"/>
    <property type="match status" value="1"/>
</dbReference>
<organism>
    <name type="scientific">Wickerhamomyces anomalus (strain ATCC 8168 / CBS 5759 / DSM 6766 / JCM 3585 / IAM 12210 / NCYC 432 / NBRC 10213 / NRRL Y-366 / AJ 5027)</name>
    <name type="common">Yeast</name>
    <name type="synonym">Pichia anomala</name>
    <dbReference type="NCBI Taxonomy" id="885923"/>
    <lineage>
        <taxon>Eukaryota</taxon>
        <taxon>Fungi</taxon>
        <taxon>Dikarya</taxon>
        <taxon>Ascomycota</taxon>
        <taxon>Saccharomycotina</taxon>
        <taxon>Saccharomycetes</taxon>
        <taxon>Phaffomycetales</taxon>
        <taxon>Wickerhamomycetaceae</taxon>
        <taxon>Wickerhamomyces</taxon>
    </lineage>
</organism>
<evidence type="ECO:0000250" key="1"/>
<evidence type="ECO:0000305" key="2"/>